<protein>
    <recommendedName>
        <fullName evidence="1">Photosystem II reaction center protein M</fullName>
        <shortName evidence="1">PSII-M</shortName>
    </recommendedName>
</protein>
<reference key="1">
    <citation type="journal article" date="2006" name="Theor. Appl. Genet.">
        <title>Complete chloroplast genome sequences of Solanum bulbocastanum, Solanum lycopersicum and comparative analyses with other Solanaceae genomes.</title>
        <authorList>
            <person name="Daniell H."/>
            <person name="Lee S.-B."/>
            <person name="Grevich J."/>
            <person name="Saski C."/>
            <person name="Quesada-Vargas T."/>
            <person name="Guda C."/>
            <person name="Tomkins J."/>
            <person name="Jansen R.K."/>
        </authorList>
    </citation>
    <scope>NUCLEOTIDE SEQUENCE [LARGE SCALE GENOMIC DNA]</scope>
    <source>
        <strain>cv. PT29</strain>
    </source>
</reference>
<gene>
    <name evidence="1" type="primary">psbM</name>
</gene>
<organism>
    <name type="scientific">Solanum bulbocastanum</name>
    <name type="common">Wild potato</name>
    <dbReference type="NCBI Taxonomy" id="147425"/>
    <lineage>
        <taxon>Eukaryota</taxon>
        <taxon>Viridiplantae</taxon>
        <taxon>Streptophyta</taxon>
        <taxon>Embryophyta</taxon>
        <taxon>Tracheophyta</taxon>
        <taxon>Spermatophyta</taxon>
        <taxon>Magnoliopsida</taxon>
        <taxon>eudicotyledons</taxon>
        <taxon>Gunneridae</taxon>
        <taxon>Pentapetalae</taxon>
        <taxon>asterids</taxon>
        <taxon>lamiids</taxon>
        <taxon>Solanales</taxon>
        <taxon>Solanaceae</taxon>
        <taxon>Solanoideae</taxon>
        <taxon>Solaneae</taxon>
        <taxon>Solanum</taxon>
    </lineage>
</organism>
<proteinExistence type="inferred from homology"/>
<evidence type="ECO:0000255" key="1">
    <source>
        <dbReference type="HAMAP-Rule" id="MF_00438"/>
    </source>
</evidence>
<sequence>MEVNILAFIATALFILVPTAFLLIIYVKTVSQND</sequence>
<feature type="chain" id="PRO_0000276255" description="Photosystem II reaction center protein M">
    <location>
        <begin position="1"/>
        <end position="34"/>
    </location>
</feature>
<feature type="transmembrane region" description="Helical" evidence="1">
    <location>
        <begin position="5"/>
        <end position="25"/>
    </location>
</feature>
<comment type="function">
    <text evidence="1">One of the components of the core complex of photosystem II (PSII). PSII is a light-driven water:plastoquinone oxidoreductase that uses light energy to abstract electrons from H(2)O, generating O(2) and a proton gradient subsequently used for ATP formation. It consists of a core antenna complex that captures photons, and an electron transfer chain that converts photonic excitation into a charge separation. This subunit is found at the monomer-monomer interface.</text>
</comment>
<comment type="subunit">
    <text evidence="1">PSII is composed of 1 copy each of membrane proteins PsbA, PsbB, PsbC, PsbD, PsbE, PsbF, PsbH, PsbI, PsbJ, PsbK, PsbL, PsbM, PsbT, PsbX, PsbY, PsbZ, Psb30/Ycf12, at least 3 peripheral proteins of the oxygen-evolving complex and a large number of cofactors. It forms dimeric complexes.</text>
</comment>
<comment type="subcellular location">
    <subcellularLocation>
        <location evidence="1">Plastid</location>
        <location evidence="1">Chloroplast thylakoid membrane</location>
        <topology evidence="1">Single-pass membrane protein</topology>
    </subcellularLocation>
</comment>
<comment type="similarity">
    <text evidence="1">Belongs to the PsbM family.</text>
</comment>
<dbReference type="EMBL" id="DQ347958">
    <property type="protein sequence ID" value="ABC56207.1"/>
    <property type="molecule type" value="Genomic_DNA"/>
</dbReference>
<dbReference type="RefSeq" id="YP_538842.1">
    <property type="nucleotide sequence ID" value="NC_007943.1"/>
</dbReference>
<dbReference type="SMR" id="Q2MIJ3"/>
<dbReference type="GeneID" id="3989546"/>
<dbReference type="GO" id="GO:0009535">
    <property type="term" value="C:chloroplast thylakoid membrane"/>
    <property type="evidence" value="ECO:0007669"/>
    <property type="project" value="UniProtKB-SubCell"/>
</dbReference>
<dbReference type="GO" id="GO:0009523">
    <property type="term" value="C:photosystem II"/>
    <property type="evidence" value="ECO:0007669"/>
    <property type="project" value="UniProtKB-KW"/>
</dbReference>
<dbReference type="GO" id="GO:0019684">
    <property type="term" value="P:photosynthesis, light reaction"/>
    <property type="evidence" value="ECO:0007669"/>
    <property type="project" value="InterPro"/>
</dbReference>
<dbReference type="HAMAP" id="MF_00438">
    <property type="entry name" value="PSII_PsbM"/>
    <property type="match status" value="1"/>
</dbReference>
<dbReference type="InterPro" id="IPR007826">
    <property type="entry name" value="PSII_PsbM"/>
</dbReference>
<dbReference type="InterPro" id="IPR037269">
    <property type="entry name" value="PSII_PsbM_sf"/>
</dbReference>
<dbReference type="NCBIfam" id="TIGR03038">
    <property type="entry name" value="PS_II_psbM"/>
    <property type="match status" value="1"/>
</dbReference>
<dbReference type="PANTHER" id="PTHR35774">
    <property type="entry name" value="PHOTOSYSTEM II REACTION CENTER PROTEIN M"/>
    <property type="match status" value="1"/>
</dbReference>
<dbReference type="PANTHER" id="PTHR35774:SF1">
    <property type="entry name" value="PHOTOSYSTEM II REACTION CENTER PROTEIN M"/>
    <property type="match status" value="1"/>
</dbReference>
<dbReference type="Pfam" id="PF05151">
    <property type="entry name" value="PsbM"/>
    <property type="match status" value="1"/>
</dbReference>
<dbReference type="SUPFAM" id="SSF161033">
    <property type="entry name" value="Photosystem II reaction center protein M, PsbM"/>
    <property type="match status" value="1"/>
</dbReference>
<keyword id="KW-0150">Chloroplast</keyword>
<keyword id="KW-0472">Membrane</keyword>
<keyword id="KW-0602">Photosynthesis</keyword>
<keyword id="KW-0604">Photosystem II</keyword>
<keyword id="KW-0934">Plastid</keyword>
<keyword id="KW-0674">Reaction center</keyword>
<keyword id="KW-0793">Thylakoid</keyword>
<keyword id="KW-0812">Transmembrane</keyword>
<keyword id="KW-1133">Transmembrane helix</keyword>
<accession>Q2MIJ3</accession>
<name>PSBM_SOLBU</name>
<geneLocation type="chloroplast"/>